<protein>
    <recommendedName>
        <fullName evidence="1">DNA ligase</fullName>
        <ecNumber evidence="1">6.5.1.2</ecNumber>
    </recommendedName>
    <alternativeName>
        <fullName evidence="1">Polydeoxyribonucleotide synthase [NAD(+)]</fullName>
    </alternativeName>
</protein>
<gene>
    <name evidence="1" type="primary">ligA</name>
    <name type="ordered locus">Pput_1594</name>
</gene>
<sequence length="776" mass="84187">MTAETRILELRAELDQHNYRYYVLDEPSVPDAEYDRLFNELKALEAEHPHLVTPDSPTQRVGGAALAAFSQVRHEVPMLSLGNAFEEADLREFGRRVVEGLDQPGAVDYSCEPKLDGLAVSLLYRDGQLVQGATRGDGTTGEDISANVRTVRNIPLKLQGKGWPAVLEVRGEVYMSKAGFDRLNAAQAEAGGKTFANPRNAAAGSLRQLDSKITASRPLEFCCYGVGQLSESIGDSHIGILEQLKAWGLPISRELKHAAGIEECLAYYRDIGERRNSLPYEIDGVVFKVNSLAAQRELGFRAREPRWAIAHKFPAMEELTEVLDVEFQVGRTGAVTPVARLKPVKVAGVTVSNATLHNMDEIARLGLRIGDTVIIRRAGDVIPQVMQVVLERRPQDARPVEVPSECPVCGSQVERTQLVKRSKGKETTSEGAVYRCVGRLACGAQLKQAIIHYVSRRAMDIDGLGEKSVEQLVDEGLIGSPADLYKLQFEQVVGLEGFAEVSTQKLLDAIEASKRPSLARFIYALGIPDVGEETAKVLARSLGSLARVQQALPQVLTYLPDIGLEVAYEIHNFFEDEHNQKVIQQLLDSGMQLQDEGELAAEFAASTTLAGMIAKLDIASVGPTGAEKLVAKLDSLDKIIAADGIDLRQALAAKQADAVREFFKDEANQKLARDIEAQLLAFGMHWSSEKKVAEGLPLAGQTWVLTGTLERMSRDIAKDKLESLGAKVAGSVSGKTHCVVAGPGAGSKLAKAAELGVKVLDEDAFVTFLAEQGIAV</sequence>
<feature type="chain" id="PRO_0000340369" description="DNA ligase">
    <location>
        <begin position="1"/>
        <end position="776"/>
    </location>
</feature>
<feature type="domain" description="BRCT" evidence="1">
    <location>
        <begin position="693"/>
        <end position="776"/>
    </location>
</feature>
<feature type="active site" description="N6-AMP-lysine intermediate" evidence="1">
    <location>
        <position position="114"/>
    </location>
</feature>
<feature type="binding site" evidence="1">
    <location>
        <begin position="31"/>
        <end position="35"/>
    </location>
    <ligand>
        <name>NAD(+)</name>
        <dbReference type="ChEBI" id="CHEBI:57540"/>
    </ligand>
</feature>
<feature type="binding site" evidence="1">
    <location>
        <begin position="80"/>
        <end position="81"/>
    </location>
    <ligand>
        <name>NAD(+)</name>
        <dbReference type="ChEBI" id="CHEBI:57540"/>
    </ligand>
</feature>
<feature type="binding site" evidence="1">
    <location>
        <position position="112"/>
    </location>
    <ligand>
        <name>NAD(+)</name>
        <dbReference type="ChEBI" id="CHEBI:57540"/>
    </ligand>
</feature>
<feature type="binding site" evidence="1">
    <location>
        <position position="135"/>
    </location>
    <ligand>
        <name>NAD(+)</name>
        <dbReference type="ChEBI" id="CHEBI:57540"/>
    </ligand>
</feature>
<feature type="binding site" evidence="1">
    <location>
        <position position="172"/>
    </location>
    <ligand>
        <name>NAD(+)</name>
        <dbReference type="ChEBI" id="CHEBI:57540"/>
    </ligand>
</feature>
<feature type="binding site" evidence="1">
    <location>
        <position position="288"/>
    </location>
    <ligand>
        <name>NAD(+)</name>
        <dbReference type="ChEBI" id="CHEBI:57540"/>
    </ligand>
</feature>
<feature type="binding site" evidence="1">
    <location>
        <position position="312"/>
    </location>
    <ligand>
        <name>NAD(+)</name>
        <dbReference type="ChEBI" id="CHEBI:57540"/>
    </ligand>
</feature>
<feature type="binding site" evidence="1">
    <location>
        <position position="406"/>
    </location>
    <ligand>
        <name>Zn(2+)</name>
        <dbReference type="ChEBI" id="CHEBI:29105"/>
    </ligand>
</feature>
<feature type="binding site" evidence="1">
    <location>
        <position position="409"/>
    </location>
    <ligand>
        <name>Zn(2+)</name>
        <dbReference type="ChEBI" id="CHEBI:29105"/>
    </ligand>
</feature>
<feature type="binding site" evidence="1">
    <location>
        <position position="436"/>
    </location>
    <ligand>
        <name>Zn(2+)</name>
        <dbReference type="ChEBI" id="CHEBI:29105"/>
    </ligand>
</feature>
<feature type="binding site" evidence="1">
    <location>
        <position position="442"/>
    </location>
    <ligand>
        <name>Zn(2+)</name>
        <dbReference type="ChEBI" id="CHEBI:29105"/>
    </ligand>
</feature>
<evidence type="ECO:0000255" key="1">
    <source>
        <dbReference type="HAMAP-Rule" id="MF_01588"/>
    </source>
</evidence>
<proteinExistence type="inferred from homology"/>
<organism>
    <name type="scientific">Pseudomonas putida (strain ATCC 700007 / DSM 6899 / JCM 31910 / BCRC 17059 / LMG 24140 / F1)</name>
    <dbReference type="NCBI Taxonomy" id="351746"/>
    <lineage>
        <taxon>Bacteria</taxon>
        <taxon>Pseudomonadati</taxon>
        <taxon>Pseudomonadota</taxon>
        <taxon>Gammaproteobacteria</taxon>
        <taxon>Pseudomonadales</taxon>
        <taxon>Pseudomonadaceae</taxon>
        <taxon>Pseudomonas</taxon>
    </lineage>
</organism>
<dbReference type="EC" id="6.5.1.2" evidence="1"/>
<dbReference type="EMBL" id="CP000712">
    <property type="protein sequence ID" value="ABQ77750.1"/>
    <property type="molecule type" value="Genomic_DNA"/>
</dbReference>
<dbReference type="SMR" id="A5W0U0"/>
<dbReference type="KEGG" id="ppf:Pput_1594"/>
<dbReference type="eggNOG" id="COG0272">
    <property type="taxonomic scope" value="Bacteria"/>
</dbReference>
<dbReference type="HOGENOM" id="CLU_007764_2_1_6"/>
<dbReference type="GO" id="GO:0005829">
    <property type="term" value="C:cytosol"/>
    <property type="evidence" value="ECO:0007669"/>
    <property type="project" value="TreeGrafter"/>
</dbReference>
<dbReference type="GO" id="GO:0003677">
    <property type="term" value="F:DNA binding"/>
    <property type="evidence" value="ECO:0007669"/>
    <property type="project" value="InterPro"/>
</dbReference>
<dbReference type="GO" id="GO:0003911">
    <property type="term" value="F:DNA ligase (NAD+) activity"/>
    <property type="evidence" value="ECO:0007669"/>
    <property type="project" value="UniProtKB-UniRule"/>
</dbReference>
<dbReference type="GO" id="GO:0046872">
    <property type="term" value="F:metal ion binding"/>
    <property type="evidence" value="ECO:0007669"/>
    <property type="project" value="UniProtKB-KW"/>
</dbReference>
<dbReference type="GO" id="GO:0006281">
    <property type="term" value="P:DNA repair"/>
    <property type="evidence" value="ECO:0007669"/>
    <property type="project" value="UniProtKB-KW"/>
</dbReference>
<dbReference type="GO" id="GO:0006260">
    <property type="term" value="P:DNA replication"/>
    <property type="evidence" value="ECO:0007669"/>
    <property type="project" value="UniProtKB-KW"/>
</dbReference>
<dbReference type="CDD" id="cd17748">
    <property type="entry name" value="BRCT_DNA_ligase_like"/>
    <property type="match status" value="1"/>
</dbReference>
<dbReference type="CDD" id="cd00114">
    <property type="entry name" value="LIGANc"/>
    <property type="match status" value="1"/>
</dbReference>
<dbReference type="FunFam" id="1.10.150.20:FF:000006">
    <property type="entry name" value="DNA ligase"/>
    <property type="match status" value="1"/>
</dbReference>
<dbReference type="FunFam" id="1.10.150.20:FF:000007">
    <property type="entry name" value="DNA ligase"/>
    <property type="match status" value="1"/>
</dbReference>
<dbReference type="FunFam" id="1.10.287.610:FF:000002">
    <property type="entry name" value="DNA ligase"/>
    <property type="match status" value="1"/>
</dbReference>
<dbReference type="FunFam" id="2.40.50.140:FF:000012">
    <property type="entry name" value="DNA ligase"/>
    <property type="match status" value="1"/>
</dbReference>
<dbReference type="FunFam" id="3.30.470.30:FF:000001">
    <property type="entry name" value="DNA ligase"/>
    <property type="match status" value="1"/>
</dbReference>
<dbReference type="Gene3D" id="6.20.10.30">
    <property type="match status" value="1"/>
</dbReference>
<dbReference type="Gene3D" id="1.10.150.20">
    <property type="entry name" value="5' to 3' exonuclease, C-terminal subdomain"/>
    <property type="match status" value="3"/>
</dbReference>
<dbReference type="Gene3D" id="3.40.50.10190">
    <property type="entry name" value="BRCT domain"/>
    <property type="match status" value="1"/>
</dbReference>
<dbReference type="Gene3D" id="3.30.470.30">
    <property type="entry name" value="DNA ligase/mRNA capping enzyme"/>
    <property type="match status" value="1"/>
</dbReference>
<dbReference type="Gene3D" id="1.10.287.610">
    <property type="entry name" value="Helix hairpin bin"/>
    <property type="match status" value="1"/>
</dbReference>
<dbReference type="Gene3D" id="2.40.50.140">
    <property type="entry name" value="Nucleic acid-binding proteins"/>
    <property type="match status" value="1"/>
</dbReference>
<dbReference type="HAMAP" id="MF_01588">
    <property type="entry name" value="DNA_ligase_A"/>
    <property type="match status" value="1"/>
</dbReference>
<dbReference type="InterPro" id="IPR001357">
    <property type="entry name" value="BRCT_dom"/>
</dbReference>
<dbReference type="InterPro" id="IPR036420">
    <property type="entry name" value="BRCT_dom_sf"/>
</dbReference>
<dbReference type="InterPro" id="IPR041663">
    <property type="entry name" value="DisA/LigA_HHH"/>
</dbReference>
<dbReference type="InterPro" id="IPR001679">
    <property type="entry name" value="DNA_ligase"/>
</dbReference>
<dbReference type="InterPro" id="IPR018239">
    <property type="entry name" value="DNA_ligase_AS"/>
</dbReference>
<dbReference type="InterPro" id="IPR033136">
    <property type="entry name" value="DNA_ligase_CS"/>
</dbReference>
<dbReference type="InterPro" id="IPR013839">
    <property type="entry name" value="DNAligase_adenylation"/>
</dbReference>
<dbReference type="InterPro" id="IPR013840">
    <property type="entry name" value="DNAligase_N"/>
</dbReference>
<dbReference type="InterPro" id="IPR003583">
    <property type="entry name" value="Hlx-hairpin-Hlx_DNA-bd_motif"/>
</dbReference>
<dbReference type="InterPro" id="IPR012340">
    <property type="entry name" value="NA-bd_OB-fold"/>
</dbReference>
<dbReference type="InterPro" id="IPR004150">
    <property type="entry name" value="NAD_DNA_ligase_OB"/>
</dbReference>
<dbReference type="InterPro" id="IPR010994">
    <property type="entry name" value="RuvA_2-like"/>
</dbReference>
<dbReference type="NCBIfam" id="TIGR00575">
    <property type="entry name" value="dnlj"/>
    <property type="match status" value="1"/>
</dbReference>
<dbReference type="NCBIfam" id="NF005932">
    <property type="entry name" value="PRK07956.1"/>
    <property type="match status" value="1"/>
</dbReference>
<dbReference type="PANTHER" id="PTHR23389">
    <property type="entry name" value="CHROMOSOME TRANSMISSION FIDELITY FACTOR 18"/>
    <property type="match status" value="1"/>
</dbReference>
<dbReference type="PANTHER" id="PTHR23389:SF9">
    <property type="entry name" value="DNA LIGASE"/>
    <property type="match status" value="1"/>
</dbReference>
<dbReference type="Pfam" id="PF00533">
    <property type="entry name" value="BRCT"/>
    <property type="match status" value="1"/>
</dbReference>
<dbReference type="Pfam" id="PF01653">
    <property type="entry name" value="DNA_ligase_aden"/>
    <property type="match status" value="1"/>
</dbReference>
<dbReference type="Pfam" id="PF03120">
    <property type="entry name" value="DNA_ligase_OB"/>
    <property type="match status" value="1"/>
</dbReference>
<dbReference type="Pfam" id="PF12826">
    <property type="entry name" value="HHH_2"/>
    <property type="match status" value="1"/>
</dbReference>
<dbReference type="Pfam" id="PF22745">
    <property type="entry name" value="Nlig-Ia"/>
    <property type="match status" value="1"/>
</dbReference>
<dbReference type="PIRSF" id="PIRSF001604">
    <property type="entry name" value="LigA"/>
    <property type="match status" value="1"/>
</dbReference>
<dbReference type="SMART" id="SM00292">
    <property type="entry name" value="BRCT"/>
    <property type="match status" value="1"/>
</dbReference>
<dbReference type="SMART" id="SM00278">
    <property type="entry name" value="HhH1"/>
    <property type="match status" value="3"/>
</dbReference>
<dbReference type="SMART" id="SM00532">
    <property type="entry name" value="LIGANc"/>
    <property type="match status" value="1"/>
</dbReference>
<dbReference type="SUPFAM" id="SSF52113">
    <property type="entry name" value="BRCT domain"/>
    <property type="match status" value="1"/>
</dbReference>
<dbReference type="SUPFAM" id="SSF56091">
    <property type="entry name" value="DNA ligase/mRNA capping enzyme, catalytic domain"/>
    <property type="match status" value="1"/>
</dbReference>
<dbReference type="SUPFAM" id="SSF50249">
    <property type="entry name" value="Nucleic acid-binding proteins"/>
    <property type="match status" value="1"/>
</dbReference>
<dbReference type="SUPFAM" id="SSF47781">
    <property type="entry name" value="RuvA domain 2-like"/>
    <property type="match status" value="2"/>
</dbReference>
<dbReference type="PROSITE" id="PS50172">
    <property type="entry name" value="BRCT"/>
    <property type="match status" value="1"/>
</dbReference>
<dbReference type="PROSITE" id="PS01055">
    <property type="entry name" value="DNA_LIGASE_N1"/>
    <property type="match status" value="1"/>
</dbReference>
<dbReference type="PROSITE" id="PS01056">
    <property type="entry name" value="DNA_LIGASE_N2"/>
    <property type="match status" value="1"/>
</dbReference>
<name>DNLJ_PSEP1</name>
<comment type="function">
    <text evidence="1">DNA ligase that catalyzes the formation of phosphodiester linkages between 5'-phosphoryl and 3'-hydroxyl groups in double-stranded DNA using NAD as a coenzyme and as the energy source for the reaction. It is essential for DNA replication and repair of damaged DNA.</text>
</comment>
<comment type="catalytic activity">
    <reaction evidence="1">
        <text>NAD(+) + (deoxyribonucleotide)n-3'-hydroxyl + 5'-phospho-(deoxyribonucleotide)m = (deoxyribonucleotide)n+m + AMP + beta-nicotinamide D-nucleotide.</text>
        <dbReference type="EC" id="6.5.1.2"/>
    </reaction>
</comment>
<comment type="cofactor">
    <cofactor evidence="1">
        <name>Mg(2+)</name>
        <dbReference type="ChEBI" id="CHEBI:18420"/>
    </cofactor>
    <cofactor evidence="1">
        <name>Mn(2+)</name>
        <dbReference type="ChEBI" id="CHEBI:29035"/>
    </cofactor>
</comment>
<comment type="similarity">
    <text evidence="1">Belongs to the NAD-dependent DNA ligase family. LigA subfamily.</text>
</comment>
<keyword id="KW-0227">DNA damage</keyword>
<keyword id="KW-0234">DNA repair</keyword>
<keyword id="KW-0235">DNA replication</keyword>
<keyword id="KW-0436">Ligase</keyword>
<keyword id="KW-0460">Magnesium</keyword>
<keyword id="KW-0464">Manganese</keyword>
<keyword id="KW-0479">Metal-binding</keyword>
<keyword id="KW-0520">NAD</keyword>
<keyword id="KW-0862">Zinc</keyword>
<reference key="1">
    <citation type="submission" date="2007-05" db="EMBL/GenBank/DDBJ databases">
        <title>Complete sequence of Pseudomonas putida F1.</title>
        <authorList>
            <consortium name="US DOE Joint Genome Institute"/>
            <person name="Copeland A."/>
            <person name="Lucas S."/>
            <person name="Lapidus A."/>
            <person name="Barry K."/>
            <person name="Detter J.C."/>
            <person name="Glavina del Rio T."/>
            <person name="Hammon N."/>
            <person name="Israni S."/>
            <person name="Dalin E."/>
            <person name="Tice H."/>
            <person name="Pitluck S."/>
            <person name="Chain P."/>
            <person name="Malfatti S."/>
            <person name="Shin M."/>
            <person name="Vergez L."/>
            <person name="Schmutz J."/>
            <person name="Larimer F."/>
            <person name="Land M."/>
            <person name="Hauser L."/>
            <person name="Kyrpides N."/>
            <person name="Lykidis A."/>
            <person name="Parales R."/>
            <person name="Richardson P."/>
        </authorList>
    </citation>
    <scope>NUCLEOTIDE SEQUENCE [LARGE SCALE GENOMIC DNA]</scope>
    <source>
        <strain>ATCC 700007 / DSM 6899 / JCM 31910 / BCRC 17059 / LMG 24140 / F1</strain>
    </source>
</reference>
<accession>A5W0U0</accession>